<evidence type="ECO:0000255" key="1">
    <source>
        <dbReference type="HAMAP-Rule" id="MF_00089"/>
    </source>
</evidence>
<accession>A7ZUK9</accession>
<feature type="chain" id="PRO_1000057592" description="Phosphomethylpyrimidine synthase">
    <location>
        <begin position="1"/>
        <end position="631"/>
    </location>
</feature>
<feature type="binding site" evidence="1">
    <location>
        <position position="239"/>
    </location>
    <ligand>
        <name>substrate</name>
    </ligand>
</feature>
<feature type="binding site" evidence="1">
    <location>
        <position position="268"/>
    </location>
    <ligand>
        <name>substrate</name>
    </ligand>
</feature>
<feature type="binding site" evidence="1">
    <location>
        <position position="297"/>
    </location>
    <ligand>
        <name>substrate</name>
    </ligand>
</feature>
<feature type="binding site" evidence="1">
    <location>
        <position position="333"/>
    </location>
    <ligand>
        <name>substrate</name>
    </ligand>
</feature>
<feature type="binding site" evidence="1">
    <location>
        <begin position="353"/>
        <end position="355"/>
    </location>
    <ligand>
        <name>substrate</name>
    </ligand>
</feature>
<feature type="binding site" evidence="1">
    <location>
        <begin position="394"/>
        <end position="397"/>
    </location>
    <ligand>
        <name>substrate</name>
    </ligand>
</feature>
<feature type="binding site" evidence="1">
    <location>
        <position position="433"/>
    </location>
    <ligand>
        <name>substrate</name>
    </ligand>
</feature>
<feature type="binding site" evidence="1">
    <location>
        <position position="437"/>
    </location>
    <ligand>
        <name>Zn(2+)</name>
        <dbReference type="ChEBI" id="CHEBI:29105"/>
    </ligand>
</feature>
<feature type="binding site" evidence="1">
    <location>
        <position position="460"/>
    </location>
    <ligand>
        <name>substrate</name>
    </ligand>
</feature>
<feature type="binding site" evidence="1">
    <location>
        <position position="501"/>
    </location>
    <ligand>
        <name>Zn(2+)</name>
        <dbReference type="ChEBI" id="CHEBI:29105"/>
    </ligand>
</feature>
<feature type="binding site" evidence="1">
    <location>
        <position position="581"/>
    </location>
    <ligand>
        <name>[4Fe-4S] cluster</name>
        <dbReference type="ChEBI" id="CHEBI:49883"/>
        <note>4Fe-4S-S-AdoMet</note>
    </ligand>
</feature>
<feature type="binding site" evidence="1">
    <location>
        <position position="584"/>
    </location>
    <ligand>
        <name>[4Fe-4S] cluster</name>
        <dbReference type="ChEBI" id="CHEBI:49883"/>
        <note>4Fe-4S-S-AdoMet</note>
    </ligand>
</feature>
<feature type="binding site" evidence="1">
    <location>
        <position position="589"/>
    </location>
    <ligand>
        <name>[4Fe-4S] cluster</name>
        <dbReference type="ChEBI" id="CHEBI:49883"/>
        <note>4Fe-4S-S-AdoMet</note>
    </ligand>
</feature>
<proteinExistence type="inferred from homology"/>
<keyword id="KW-0004">4Fe-4S</keyword>
<keyword id="KW-0408">Iron</keyword>
<keyword id="KW-0411">Iron-sulfur</keyword>
<keyword id="KW-0456">Lyase</keyword>
<keyword id="KW-0479">Metal-binding</keyword>
<keyword id="KW-1185">Reference proteome</keyword>
<keyword id="KW-0949">S-adenosyl-L-methionine</keyword>
<keyword id="KW-0784">Thiamine biosynthesis</keyword>
<keyword id="KW-0862">Zinc</keyword>
<reference key="1">
    <citation type="journal article" date="2008" name="J. Bacteriol.">
        <title>The pangenome structure of Escherichia coli: comparative genomic analysis of E. coli commensal and pathogenic isolates.</title>
        <authorList>
            <person name="Rasko D.A."/>
            <person name="Rosovitz M.J."/>
            <person name="Myers G.S.A."/>
            <person name="Mongodin E.F."/>
            <person name="Fricke W.F."/>
            <person name="Gajer P."/>
            <person name="Crabtree J."/>
            <person name="Sebaihia M."/>
            <person name="Thomson N.R."/>
            <person name="Chaudhuri R."/>
            <person name="Henderson I.R."/>
            <person name="Sperandio V."/>
            <person name="Ravel J."/>
        </authorList>
    </citation>
    <scope>NUCLEOTIDE SEQUENCE [LARGE SCALE GENOMIC DNA]</scope>
    <source>
        <strain>E24377A / ETEC</strain>
    </source>
</reference>
<dbReference type="EC" id="4.1.99.17" evidence="1"/>
<dbReference type="EMBL" id="CP000800">
    <property type="protein sequence ID" value="ABV21003.1"/>
    <property type="molecule type" value="Genomic_DNA"/>
</dbReference>
<dbReference type="RefSeq" id="WP_001276927.1">
    <property type="nucleotide sequence ID" value="NC_009801.1"/>
</dbReference>
<dbReference type="SMR" id="A7ZUK9"/>
<dbReference type="KEGG" id="ecw:EcE24377A_4536"/>
<dbReference type="HOGENOM" id="CLU_013181_2_1_6"/>
<dbReference type="UniPathway" id="UPA00060"/>
<dbReference type="Proteomes" id="UP000001122">
    <property type="component" value="Chromosome"/>
</dbReference>
<dbReference type="GO" id="GO:0005829">
    <property type="term" value="C:cytosol"/>
    <property type="evidence" value="ECO:0007669"/>
    <property type="project" value="TreeGrafter"/>
</dbReference>
<dbReference type="GO" id="GO:0051539">
    <property type="term" value="F:4 iron, 4 sulfur cluster binding"/>
    <property type="evidence" value="ECO:0007669"/>
    <property type="project" value="UniProtKB-KW"/>
</dbReference>
<dbReference type="GO" id="GO:0016830">
    <property type="term" value="F:carbon-carbon lyase activity"/>
    <property type="evidence" value="ECO:0007669"/>
    <property type="project" value="InterPro"/>
</dbReference>
<dbReference type="GO" id="GO:0008270">
    <property type="term" value="F:zinc ion binding"/>
    <property type="evidence" value="ECO:0007669"/>
    <property type="project" value="UniProtKB-UniRule"/>
</dbReference>
<dbReference type="GO" id="GO:0009228">
    <property type="term" value="P:thiamine biosynthetic process"/>
    <property type="evidence" value="ECO:0007669"/>
    <property type="project" value="UniProtKB-KW"/>
</dbReference>
<dbReference type="GO" id="GO:0009229">
    <property type="term" value="P:thiamine diphosphate biosynthetic process"/>
    <property type="evidence" value="ECO:0007669"/>
    <property type="project" value="UniProtKB-UniRule"/>
</dbReference>
<dbReference type="FunFam" id="3.20.20.540:FF:000001">
    <property type="entry name" value="Phosphomethylpyrimidine synthase"/>
    <property type="match status" value="1"/>
</dbReference>
<dbReference type="Gene3D" id="6.10.250.620">
    <property type="match status" value="1"/>
</dbReference>
<dbReference type="Gene3D" id="3.20.20.540">
    <property type="entry name" value="Radical SAM ThiC family, central domain"/>
    <property type="match status" value="1"/>
</dbReference>
<dbReference type="HAMAP" id="MF_00089">
    <property type="entry name" value="ThiC"/>
    <property type="match status" value="1"/>
</dbReference>
<dbReference type="InterPro" id="IPR037509">
    <property type="entry name" value="ThiC"/>
</dbReference>
<dbReference type="InterPro" id="IPR025747">
    <property type="entry name" value="ThiC-associated_dom"/>
</dbReference>
<dbReference type="InterPro" id="IPR038521">
    <property type="entry name" value="ThiC/Bza_core_dom"/>
</dbReference>
<dbReference type="InterPro" id="IPR002817">
    <property type="entry name" value="ThiC/BzaA/B"/>
</dbReference>
<dbReference type="NCBIfam" id="NF006763">
    <property type="entry name" value="PRK09284.1"/>
    <property type="match status" value="1"/>
</dbReference>
<dbReference type="NCBIfam" id="NF009895">
    <property type="entry name" value="PRK13352.1"/>
    <property type="match status" value="1"/>
</dbReference>
<dbReference type="NCBIfam" id="TIGR00190">
    <property type="entry name" value="thiC"/>
    <property type="match status" value="1"/>
</dbReference>
<dbReference type="PANTHER" id="PTHR30557:SF1">
    <property type="entry name" value="PHOSPHOMETHYLPYRIMIDINE SYNTHASE, CHLOROPLASTIC"/>
    <property type="match status" value="1"/>
</dbReference>
<dbReference type="PANTHER" id="PTHR30557">
    <property type="entry name" value="THIAMINE BIOSYNTHESIS PROTEIN THIC"/>
    <property type="match status" value="1"/>
</dbReference>
<dbReference type="Pfam" id="PF13667">
    <property type="entry name" value="ThiC-associated"/>
    <property type="match status" value="1"/>
</dbReference>
<dbReference type="Pfam" id="PF01964">
    <property type="entry name" value="ThiC_Rad_SAM"/>
    <property type="match status" value="1"/>
</dbReference>
<dbReference type="SFLD" id="SFLDF00407">
    <property type="entry name" value="phosphomethylpyrimidine_syntha"/>
    <property type="match status" value="1"/>
</dbReference>
<dbReference type="SFLD" id="SFLDG01114">
    <property type="entry name" value="phosphomethylpyrimidine_syntha"/>
    <property type="match status" value="1"/>
</dbReference>
<dbReference type="SFLD" id="SFLDS00113">
    <property type="entry name" value="Radical_SAM_Phosphomethylpyrim"/>
    <property type="match status" value="1"/>
</dbReference>
<comment type="function">
    <text evidence="1">Catalyzes the synthesis of the hydroxymethylpyrimidine phosphate (HMP-P) moiety of thiamine from aminoimidazole ribotide (AIR) in a radical S-adenosyl-L-methionine (SAM)-dependent reaction.</text>
</comment>
<comment type="catalytic activity">
    <reaction evidence="1">
        <text>5-amino-1-(5-phospho-beta-D-ribosyl)imidazole + S-adenosyl-L-methionine = 4-amino-2-methyl-5-(phosphooxymethyl)pyrimidine + CO + 5'-deoxyadenosine + formate + L-methionine + 3 H(+)</text>
        <dbReference type="Rhea" id="RHEA:24840"/>
        <dbReference type="ChEBI" id="CHEBI:15378"/>
        <dbReference type="ChEBI" id="CHEBI:15740"/>
        <dbReference type="ChEBI" id="CHEBI:17245"/>
        <dbReference type="ChEBI" id="CHEBI:17319"/>
        <dbReference type="ChEBI" id="CHEBI:57844"/>
        <dbReference type="ChEBI" id="CHEBI:58354"/>
        <dbReference type="ChEBI" id="CHEBI:59789"/>
        <dbReference type="ChEBI" id="CHEBI:137981"/>
        <dbReference type="EC" id="4.1.99.17"/>
    </reaction>
</comment>
<comment type="cofactor">
    <cofactor evidence="1">
        <name>[4Fe-4S] cluster</name>
        <dbReference type="ChEBI" id="CHEBI:49883"/>
    </cofactor>
    <text evidence="1">Binds 1 [4Fe-4S] cluster per subunit. The cluster is coordinated with 3 cysteines and an exchangeable S-adenosyl-L-methionine.</text>
</comment>
<comment type="pathway">
    <text evidence="1">Cofactor biosynthesis; thiamine diphosphate biosynthesis.</text>
</comment>
<comment type="subunit">
    <text evidence="1">Homodimer.</text>
</comment>
<comment type="similarity">
    <text evidence="1">Belongs to the ThiC family.</text>
</comment>
<organism>
    <name type="scientific">Escherichia coli O139:H28 (strain E24377A / ETEC)</name>
    <dbReference type="NCBI Taxonomy" id="331111"/>
    <lineage>
        <taxon>Bacteria</taxon>
        <taxon>Pseudomonadati</taxon>
        <taxon>Pseudomonadota</taxon>
        <taxon>Gammaproteobacteria</taxon>
        <taxon>Enterobacterales</taxon>
        <taxon>Enterobacteriaceae</taxon>
        <taxon>Escherichia</taxon>
    </lineage>
</organism>
<gene>
    <name evidence="1" type="primary">thiC</name>
    <name type="ordered locus">EcE24377A_4536</name>
</gene>
<sequence>MSATKLTRREQRARAQHFIDTLEGTAFPNSKRIYITGTHPGVRVPMREIQLSPTLIGGSKEQPQYEENEAIPVYDTSGPYGDPQIAINVQQGLAKLRQPWIDARGDTEELTVRSSDYTKARLADDGLDELRFSGVLTPKRAKAGRRVTQLHYARQGIITPEMEFIAIRENMGRERIRSEVLRHQHPGMSFGAHLPENITAEFVRDEVAAGRAIIPANINHPESEPMIIGRNFLVKVNANIGNSAVTSSIEEEVEKLVWSTRWGADTVMDLSTGRYIHETREWILRNSPVPIGTVPIYQALEKVNGIAEDLTWEAFRDTLLEQAEQGVDYFTIHAGVLLRYVPMTAKRLTGIVSRGGSIMAKWCLSHHQENFLYQHFREICEICAAYDVSLSLGDGLRPGSIQDANDEAQFAELHTLGELTKIAWEYDVQVMIEGPGHVPMQMIRRNMTKELEHCHEAPFYTLGPLTTDIAPGYDHFTSGIGAAMIGWFGCAMLCYVTPKEHLGLPNKEDVKQGLITYKIAAHAADLAKGHPGAQIRDNAMSKARFEFRWEDQFNLALDPFTARAYHDETLPQESGKVAHFCSMCGPKFCSMKISQEVRDYAATQTIEMGMADMSENFRARGGEIYLRKEEA</sequence>
<name>THIC_ECO24</name>
<protein>
    <recommendedName>
        <fullName evidence="1">Phosphomethylpyrimidine synthase</fullName>
        <ecNumber evidence="1">4.1.99.17</ecNumber>
    </recommendedName>
    <alternativeName>
        <fullName evidence="1">Hydroxymethylpyrimidine phosphate synthase</fullName>
        <shortName evidence="1">HMP-P synthase</shortName>
        <shortName evidence="1">HMP-phosphate synthase</shortName>
        <shortName evidence="1">HMPP synthase</shortName>
    </alternativeName>
    <alternativeName>
        <fullName evidence="1">Thiamine biosynthesis protein ThiC</fullName>
    </alternativeName>
</protein>